<reference key="1">
    <citation type="journal article" date="1996" name="Mol. Microbiol.">
        <title>Organizational characteristics and information content of an archaeal genome: 156 kb of sequence from Sulfolobus solfataricus P2.</title>
        <authorList>
            <person name="Sensen C.W."/>
            <person name="Klenk H.-P."/>
            <person name="Singh R.K."/>
            <person name="Allard G."/>
            <person name="Chan C.C.-Y."/>
            <person name="Liu Q.Y."/>
            <person name="Penny S.L."/>
            <person name="Young F."/>
            <person name="Schenk M.E."/>
            <person name="Gaasterland T."/>
            <person name="Doolittle W.F."/>
            <person name="Ragan M.A."/>
            <person name="Charlebois R.L."/>
        </authorList>
    </citation>
    <scope>NUCLEOTIDE SEQUENCE [GENOMIC DNA]</scope>
    <source>
        <strain>ATCC 35092 / DSM 1617 / JCM 11322 / P2</strain>
    </source>
</reference>
<reference key="2">
    <citation type="journal article" date="2001" name="Proc. Natl. Acad. Sci. U.S.A.">
        <title>The complete genome of the crenarchaeon Sulfolobus solfataricus P2.</title>
        <authorList>
            <person name="She Q."/>
            <person name="Singh R.K."/>
            <person name="Confalonieri F."/>
            <person name="Zivanovic Y."/>
            <person name="Allard G."/>
            <person name="Awayez M.J."/>
            <person name="Chan-Weiher C.C.-Y."/>
            <person name="Clausen I.G."/>
            <person name="Curtis B.A."/>
            <person name="De Moors A."/>
            <person name="Erauso G."/>
            <person name="Fletcher C."/>
            <person name="Gordon P.M.K."/>
            <person name="Heikamp-de Jong I."/>
            <person name="Jeffries A.C."/>
            <person name="Kozera C.J."/>
            <person name="Medina N."/>
            <person name="Peng X."/>
            <person name="Thi-Ngoc H.P."/>
            <person name="Redder P."/>
            <person name="Schenk M.E."/>
            <person name="Theriault C."/>
            <person name="Tolstrup N."/>
            <person name="Charlebois R.L."/>
            <person name="Doolittle W.F."/>
            <person name="Duguet M."/>
            <person name="Gaasterland T."/>
            <person name="Garrett R.A."/>
            <person name="Ragan M.A."/>
            <person name="Sensen C.W."/>
            <person name="Van der Oost J."/>
        </authorList>
    </citation>
    <scope>NUCLEOTIDE SEQUENCE [LARGE SCALE GENOMIC DNA]</scope>
    <source>
        <strain>ATCC 35092 / DSM 1617 / JCM 11322 / P2</strain>
    </source>
</reference>
<accession>P96000</accession>
<protein>
    <recommendedName>
        <fullName>Putative UDP-N-acetylglucosamine--dolichyl-phosphate N-acetylglucosaminephosphotransferase</fullName>
        <ecNumber>2.7.8.15</ecNumber>
    </recommendedName>
    <alternativeName>
        <fullName>GlcNAc-1-P transferase</fullName>
        <shortName>G1PT</shortName>
        <shortName>GPT</shortName>
    </alternativeName>
    <alternativeName>
        <fullName>N-acetylglucosamine-1-phosphate transferase</fullName>
    </alternativeName>
</protein>
<name>GPT_SACS2</name>
<proteinExistence type="inferred from homology"/>
<organism>
    <name type="scientific">Saccharolobus solfataricus (strain ATCC 35092 / DSM 1617 / JCM 11322 / P2)</name>
    <name type="common">Sulfolobus solfataricus</name>
    <dbReference type="NCBI Taxonomy" id="273057"/>
    <lineage>
        <taxon>Archaea</taxon>
        <taxon>Thermoproteota</taxon>
        <taxon>Thermoprotei</taxon>
        <taxon>Sulfolobales</taxon>
        <taxon>Sulfolobaceae</taxon>
        <taxon>Saccharolobus</taxon>
    </lineage>
</organism>
<feature type="chain" id="PRO_0000108767" description="Putative UDP-N-acetylglucosamine--dolichyl-phosphate N-acetylglucosaminephosphotransferase">
    <location>
        <begin position="1"/>
        <end position="322"/>
    </location>
</feature>
<feature type="transmembrane region" description="Helical" evidence="2">
    <location>
        <begin position="5"/>
        <end position="25"/>
    </location>
</feature>
<feature type="transmembrane region" description="Helical" evidence="2">
    <location>
        <begin position="46"/>
        <end position="66"/>
    </location>
</feature>
<feature type="transmembrane region" description="Helical" evidence="2">
    <location>
        <begin position="76"/>
        <end position="96"/>
    </location>
</feature>
<feature type="transmembrane region" description="Helical" evidence="2">
    <location>
        <begin position="102"/>
        <end position="122"/>
    </location>
</feature>
<feature type="transmembrane region" description="Helical" evidence="2">
    <location>
        <begin position="123"/>
        <end position="143"/>
    </location>
</feature>
<feature type="transmembrane region" description="Helical" evidence="2">
    <location>
        <begin position="160"/>
        <end position="180"/>
    </location>
</feature>
<feature type="transmembrane region" description="Helical" evidence="2">
    <location>
        <begin position="186"/>
        <end position="206"/>
    </location>
</feature>
<feature type="transmembrane region" description="Helical" evidence="2">
    <location>
        <begin position="222"/>
        <end position="242"/>
    </location>
</feature>
<feature type="transmembrane region" description="Helical" evidence="2">
    <location>
        <begin position="295"/>
        <end position="315"/>
    </location>
</feature>
<keyword id="KW-1003">Cell membrane</keyword>
<keyword id="KW-0328">Glycosyltransferase</keyword>
<keyword id="KW-0472">Membrane</keyword>
<keyword id="KW-1185">Reference proteome</keyword>
<keyword id="KW-0808">Transferase</keyword>
<keyword id="KW-0812">Transmembrane</keyword>
<keyword id="KW-1133">Transmembrane helix</keyword>
<dbReference type="EC" id="2.7.8.15"/>
<dbReference type="EMBL" id="Y08257">
    <property type="protein sequence ID" value="CAA69542.1"/>
    <property type="molecule type" value="Genomic_DNA"/>
</dbReference>
<dbReference type="EMBL" id="AE006641">
    <property type="protein sequence ID" value="AAK40422.1"/>
    <property type="molecule type" value="Genomic_DNA"/>
</dbReference>
<dbReference type="PIR" id="S75428">
    <property type="entry name" value="S75428"/>
</dbReference>
<dbReference type="RefSeq" id="WP_009988861.1">
    <property type="nucleotide sequence ID" value="NC_002754.1"/>
</dbReference>
<dbReference type="SMR" id="P96000"/>
<dbReference type="FunCoup" id="P96000">
    <property type="interactions" value="251"/>
</dbReference>
<dbReference type="STRING" id="273057.SSO0060"/>
<dbReference type="PaxDb" id="273057-SSO0060"/>
<dbReference type="DNASU" id="1455313"/>
<dbReference type="EnsemblBacteria" id="AAK40422">
    <property type="protein sequence ID" value="AAK40422"/>
    <property type="gene ID" value="SSO0060"/>
</dbReference>
<dbReference type="KEGG" id="sso:SSO0060"/>
<dbReference type="PATRIC" id="fig|273057.12.peg.61"/>
<dbReference type="eggNOG" id="arCOG03199">
    <property type="taxonomic scope" value="Archaea"/>
</dbReference>
<dbReference type="HOGENOM" id="CLU_023982_4_0_2"/>
<dbReference type="InParanoid" id="P96000"/>
<dbReference type="PhylomeDB" id="P96000"/>
<dbReference type="PRO" id="PR:P96000"/>
<dbReference type="Proteomes" id="UP000001974">
    <property type="component" value="Chromosome"/>
</dbReference>
<dbReference type="GO" id="GO:0005886">
    <property type="term" value="C:plasma membrane"/>
    <property type="evidence" value="ECO:0000318"/>
    <property type="project" value="GO_Central"/>
</dbReference>
<dbReference type="GO" id="GO:0016757">
    <property type="term" value="F:glycosyltransferase activity"/>
    <property type="evidence" value="ECO:0007669"/>
    <property type="project" value="UniProtKB-KW"/>
</dbReference>
<dbReference type="GO" id="GO:0016780">
    <property type="term" value="F:phosphotransferase activity, for other substituted phosphate groups"/>
    <property type="evidence" value="ECO:0000318"/>
    <property type="project" value="GO_Central"/>
</dbReference>
<dbReference type="GO" id="GO:0003975">
    <property type="term" value="F:UDP-N-acetylglucosamine-dolichyl-phosphate N-acetylglucosaminephosphotransferase activity"/>
    <property type="evidence" value="ECO:0007669"/>
    <property type="project" value="UniProtKB-EC"/>
</dbReference>
<dbReference type="GO" id="GO:0044038">
    <property type="term" value="P:cell wall macromolecule biosynthetic process"/>
    <property type="evidence" value="ECO:0000318"/>
    <property type="project" value="GO_Central"/>
</dbReference>
<dbReference type="GO" id="GO:0071555">
    <property type="term" value="P:cell wall organization"/>
    <property type="evidence" value="ECO:0000318"/>
    <property type="project" value="GO_Central"/>
</dbReference>
<dbReference type="CDD" id="cd06856">
    <property type="entry name" value="GT_GPT_archaea"/>
    <property type="match status" value="1"/>
</dbReference>
<dbReference type="InterPro" id="IPR000715">
    <property type="entry name" value="Glycosyl_transferase_4"/>
</dbReference>
<dbReference type="PANTHER" id="PTHR22926">
    <property type="entry name" value="PHOSPHO-N-ACETYLMURAMOYL-PENTAPEPTIDE-TRANSFERASE"/>
    <property type="match status" value="1"/>
</dbReference>
<dbReference type="PANTHER" id="PTHR22926:SF3">
    <property type="entry name" value="UNDECAPRENYL-PHOSPHATE ALPHA-N-ACETYLGLUCOSAMINYL 1-PHOSPHATE TRANSFERASE"/>
    <property type="match status" value="1"/>
</dbReference>
<dbReference type="Pfam" id="PF00953">
    <property type="entry name" value="Glycos_transf_4"/>
    <property type="match status" value="1"/>
</dbReference>
<evidence type="ECO:0000250" key="1"/>
<evidence type="ECO:0000255" key="2"/>
<evidence type="ECO:0000305" key="3"/>
<comment type="catalytic activity">
    <reaction>
        <text>a di-trans,poly-cis-dolichyl phosphate + UDP-N-acetyl-alpha-D-glucosamine = an N-acetyl-alpha-D-glucosaminyl-diphospho-di-trans,poly-cis-dolichol + UMP</text>
        <dbReference type="Rhea" id="RHEA:13289"/>
        <dbReference type="Rhea" id="RHEA-COMP:19498"/>
        <dbReference type="Rhea" id="RHEA-COMP:19507"/>
        <dbReference type="ChEBI" id="CHEBI:57683"/>
        <dbReference type="ChEBI" id="CHEBI:57705"/>
        <dbReference type="ChEBI" id="CHEBI:57865"/>
        <dbReference type="ChEBI" id="CHEBI:58427"/>
        <dbReference type="EC" id="2.7.8.15"/>
    </reaction>
</comment>
<comment type="activity regulation">
    <text evidence="1">Inhibited by tunicamycin.</text>
</comment>
<comment type="subcellular location">
    <subcellularLocation>
        <location evidence="3">Cell membrane</location>
        <topology evidence="3">Multi-pass membrane protein</topology>
    </subcellularLocation>
</comment>
<comment type="similarity">
    <text evidence="3">Belongs to the glycosyltransferase 4 family.</text>
</comment>
<sequence>MRILAILLPILISFFISYITTVWVIRQAKKSRFVGKDINKPDKPEIPLLGGIGIIAGFIAGSFSLLLTDVRSERVIPAVILSSLLIAFLGLLDDIFNVRQSVRAFLPIFASVPLIVYSVGHSIISIPFLGPINFGIFYYIIIIPFALTITSNAFNMLEGLNGLGVGMGIIMLSALAYIGLTHTGPTYQAGLIALSAIFSLSAFLIFNKYPAKIFPGNVGTYFIGALIGAIGIAGFMYTALAILYIPYVVEFILKLRTNFKGVSFGKVDSSGRLYWDEKPHSLTHIVMKMGRFKEYQVVIILWGMEAIFAVIAVILQTTTIVI</sequence>
<gene>
    <name type="primary">gnpTA</name>
    <name type="ordered locus">SSO0060</name>
    <name type="ORF">C05011</name>
</gene>